<protein>
    <recommendedName>
        <fullName>Gene 84 protein</fullName>
    </recommendedName>
    <alternativeName>
        <fullName>Gp84</fullName>
    </alternativeName>
</protein>
<organismHost>
    <name type="scientific">Mycobacterium</name>
    <dbReference type="NCBI Taxonomy" id="1763"/>
</organismHost>
<dbReference type="EMBL" id="AF022214">
    <property type="protein sequence ID" value="AAC18515.1"/>
    <property type="molecule type" value="Genomic_DNA"/>
</dbReference>
<dbReference type="PIR" id="A72809">
    <property type="entry name" value="A72809"/>
</dbReference>
<dbReference type="RefSeq" id="NP_046891.1">
    <property type="nucleotide sequence ID" value="NC_001900.1"/>
</dbReference>
<dbReference type="SMR" id="O64266"/>
<dbReference type="GeneID" id="1261557"/>
<dbReference type="KEGG" id="vg:1261557"/>
<dbReference type="OrthoDB" id="22256at10239"/>
<dbReference type="Proteomes" id="UP000002131">
    <property type="component" value="Segment"/>
</dbReference>
<dbReference type="InterPro" id="IPR056577">
    <property type="entry name" value="Phage_Gp84"/>
</dbReference>
<dbReference type="Pfam" id="PF23794">
    <property type="entry name" value="Phage_Gp84"/>
    <property type="match status" value="1"/>
</dbReference>
<accession>O64266</accession>
<keyword id="KW-1185">Reference proteome</keyword>
<sequence>MFTLTATRDRDGKNTKVSASHRQILIDHLEAAASRNGLVIDQLGDGGHIYLRGEAVGTWEVSAS</sequence>
<organism>
    <name type="scientific">Mycobacterium phage D29</name>
    <name type="common">Mycobacteriophage D29</name>
    <dbReference type="NCBI Taxonomy" id="28369"/>
    <lineage>
        <taxon>Viruses</taxon>
        <taxon>Duplodnaviria</taxon>
        <taxon>Heunggongvirae</taxon>
        <taxon>Uroviricota</taxon>
        <taxon>Caudoviricetes</taxon>
        <taxon>Fromanvirus</taxon>
    </lineage>
</organism>
<name>VG84_BPMD2</name>
<proteinExistence type="predicted"/>
<reference key="1">
    <citation type="journal article" date="1998" name="J. Mol. Biol.">
        <title>Genome structure of mycobacteriophage D29: implications for phage evolution.</title>
        <authorList>
            <person name="Ford M.E."/>
            <person name="Sarkis G.J."/>
            <person name="Belanger A.E."/>
            <person name="Hendrix R.W."/>
            <person name="Hatfull G.F."/>
        </authorList>
    </citation>
    <scope>NUCLEOTIDE SEQUENCE [LARGE SCALE GENOMIC DNA]</scope>
</reference>
<feature type="chain" id="PRO_0000164827" description="Gene 84 protein">
    <location>
        <begin position="1"/>
        <end position="64"/>
    </location>
</feature>
<gene>
    <name type="primary">84</name>
</gene>